<proteinExistence type="inferred from homology"/>
<keyword id="KW-0238">DNA-binding</keyword>
<keyword id="KW-0255">Endonuclease</keyword>
<keyword id="KW-0378">Hydrolase</keyword>
<keyword id="KW-0460">Magnesium</keyword>
<keyword id="KW-0479">Metal-binding</keyword>
<keyword id="KW-0540">Nuclease</keyword>
<keyword id="KW-0630">Potassium</keyword>
<keyword id="KW-1185">Reference proteome</keyword>
<evidence type="ECO:0000255" key="1">
    <source>
        <dbReference type="HAMAP-Rule" id="MF_01192"/>
    </source>
</evidence>
<evidence type="ECO:0000305" key="2"/>
<dbReference type="EC" id="3.1.-.-" evidence="1"/>
<dbReference type="EMBL" id="AE005174">
    <property type="protein sequence ID" value="AAG57912.1"/>
    <property type="status" value="ALT_INIT"/>
    <property type="molecule type" value="Genomic_DNA"/>
</dbReference>
<dbReference type="EMBL" id="BA000007">
    <property type="protein sequence ID" value="BAB37081.1"/>
    <property type="status" value="ALT_INIT"/>
    <property type="molecule type" value="Genomic_DNA"/>
</dbReference>
<dbReference type="PIR" id="B91086">
    <property type="entry name" value="B91086"/>
</dbReference>
<dbReference type="PIR" id="D85931">
    <property type="entry name" value="D85931"/>
</dbReference>
<dbReference type="RefSeq" id="NP_311685.2">
    <property type="nucleotide sequence ID" value="NC_002695.1"/>
</dbReference>
<dbReference type="RefSeq" id="WP_000268232.1">
    <property type="nucleotide sequence ID" value="NZ_VOAI01000003.1"/>
</dbReference>
<dbReference type="SMR" id="Q8X6R9"/>
<dbReference type="STRING" id="155864.Z4115"/>
<dbReference type="GeneID" id="916535"/>
<dbReference type="GeneID" id="93779200"/>
<dbReference type="KEGG" id="ece:Z4115"/>
<dbReference type="KEGG" id="ecs:ECs_3658"/>
<dbReference type="PATRIC" id="fig|386585.9.peg.3824"/>
<dbReference type="eggNOG" id="COG0258">
    <property type="taxonomic scope" value="Bacteria"/>
</dbReference>
<dbReference type="HOGENOM" id="CLU_004675_1_2_6"/>
<dbReference type="OMA" id="WRVDLIP"/>
<dbReference type="EvolutionaryTrace" id="Q8X6R9"/>
<dbReference type="Proteomes" id="UP000000558">
    <property type="component" value="Chromosome"/>
</dbReference>
<dbReference type="Proteomes" id="UP000002519">
    <property type="component" value="Chromosome"/>
</dbReference>
<dbReference type="GO" id="GO:0008409">
    <property type="term" value="F:5'-3' exonuclease activity"/>
    <property type="evidence" value="ECO:0007669"/>
    <property type="project" value="InterPro"/>
</dbReference>
<dbReference type="GO" id="GO:0017108">
    <property type="term" value="F:5'-flap endonuclease activity"/>
    <property type="evidence" value="ECO:0007669"/>
    <property type="project" value="UniProtKB-UniRule"/>
</dbReference>
<dbReference type="GO" id="GO:0003677">
    <property type="term" value="F:DNA binding"/>
    <property type="evidence" value="ECO:0007669"/>
    <property type="project" value="UniProtKB-UniRule"/>
</dbReference>
<dbReference type="GO" id="GO:0000287">
    <property type="term" value="F:magnesium ion binding"/>
    <property type="evidence" value="ECO:0007669"/>
    <property type="project" value="UniProtKB-UniRule"/>
</dbReference>
<dbReference type="GO" id="GO:0030955">
    <property type="term" value="F:potassium ion binding"/>
    <property type="evidence" value="ECO:0007669"/>
    <property type="project" value="UniProtKB-UniRule"/>
</dbReference>
<dbReference type="GO" id="GO:0033567">
    <property type="term" value="P:DNA replication, Okazaki fragment processing"/>
    <property type="evidence" value="ECO:0007669"/>
    <property type="project" value="UniProtKB-UniRule"/>
</dbReference>
<dbReference type="CDD" id="cd09898">
    <property type="entry name" value="H3TH_53EXO"/>
    <property type="match status" value="1"/>
</dbReference>
<dbReference type="CDD" id="cd09859">
    <property type="entry name" value="PIN_53EXO"/>
    <property type="match status" value="1"/>
</dbReference>
<dbReference type="FunFam" id="1.10.150.20:FF:000003">
    <property type="entry name" value="DNA polymerase I"/>
    <property type="match status" value="1"/>
</dbReference>
<dbReference type="FunFam" id="3.40.50.1010:FF:000011">
    <property type="entry name" value="Flap endonuclease Xni"/>
    <property type="match status" value="1"/>
</dbReference>
<dbReference type="Gene3D" id="1.10.150.20">
    <property type="entry name" value="5' to 3' exonuclease, C-terminal subdomain"/>
    <property type="match status" value="1"/>
</dbReference>
<dbReference type="Gene3D" id="3.40.50.1010">
    <property type="entry name" value="5'-nuclease"/>
    <property type="match status" value="1"/>
</dbReference>
<dbReference type="HAMAP" id="MF_01192">
    <property type="entry name" value="Xni"/>
    <property type="match status" value="1"/>
</dbReference>
<dbReference type="InterPro" id="IPR020046">
    <property type="entry name" value="5-3_exonucl_a-hlix_arch_N"/>
</dbReference>
<dbReference type="InterPro" id="IPR002421">
    <property type="entry name" value="5-3_exonuclease"/>
</dbReference>
<dbReference type="InterPro" id="IPR036279">
    <property type="entry name" value="5-3_exonuclease_C_sf"/>
</dbReference>
<dbReference type="InterPro" id="IPR020045">
    <property type="entry name" value="DNA_polI_H3TH"/>
</dbReference>
<dbReference type="InterPro" id="IPR038969">
    <property type="entry name" value="FEN"/>
</dbReference>
<dbReference type="InterPro" id="IPR008918">
    <property type="entry name" value="HhH2"/>
</dbReference>
<dbReference type="InterPro" id="IPR029060">
    <property type="entry name" value="PIN-like_dom_sf"/>
</dbReference>
<dbReference type="InterPro" id="IPR022895">
    <property type="entry name" value="Xni"/>
</dbReference>
<dbReference type="NCBIfam" id="NF007017">
    <property type="entry name" value="PRK09482.1"/>
    <property type="match status" value="1"/>
</dbReference>
<dbReference type="PANTHER" id="PTHR42646:SF2">
    <property type="entry name" value="5'-3' EXONUCLEASE FAMILY PROTEIN"/>
    <property type="match status" value="1"/>
</dbReference>
<dbReference type="PANTHER" id="PTHR42646">
    <property type="entry name" value="FLAP ENDONUCLEASE XNI"/>
    <property type="match status" value="1"/>
</dbReference>
<dbReference type="Pfam" id="PF01367">
    <property type="entry name" value="5_3_exonuc"/>
    <property type="match status" value="1"/>
</dbReference>
<dbReference type="Pfam" id="PF02739">
    <property type="entry name" value="5_3_exonuc_N"/>
    <property type="match status" value="1"/>
</dbReference>
<dbReference type="SMART" id="SM00475">
    <property type="entry name" value="53EXOc"/>
    <property type="match status" value="1"/>
</dbReference>
<dbReference type="SMART" id="SM00279">
    <property type="entry name" value="HhH2"/>
    <property type="match status" value="1"/>
</dbReference>
<dbReference type="SUPFAM" id="SSF47807">
    <property type="entry name" value="5' to 3' exonuclease, C-terminal subdomain"/>
    <property type="match status" value="1"/>
</dbReference>
<dbReference type="SUPFAM" id="SSF88723">
    <property type="entry name" value="PIN domain-like"/>
    <property type="match status" value="1"/>
</dbReference>
<organism>
    <name type="scientific">Escherichia coli O157:H7</name>
    <dbReference type="NCBI Taxonomy" id="83334"/>
    <lineage>
        <taxon>Bacteria</taxon>
        <taxon>Pseudomonadati</taxon>
        <taxon>Pseudomonadota</taxon>
        <taxon>Gammaproteobacteria</taxon>
        <taxon>Enterobacterales</taxon>
        <taxon>Enterobacteriaceae</taxon>
        <taxon>Escherichia</taxon>
    </lineage>
</organism>
<accession>Q8X6R9</accession>
<accession>Q7AB70</accession>
<feature type="chain" id="PRO_0000297861" description="Flap endonuclease Xni">
    <location>
        <begin position="1"/>
        <end position="251"/>
    </location>
</feature>
<feature type="domain" description="5'-3' exonuclease" evidence="1">
    <location>
        <begin position="160"/>
        <end position="249"/>
    </location>
</feature>
<feature type="region of interest" description="Interaction with DNA" evidence="1">
    <location>
        <begin position="184"/>
        <end position="189"/>
    </location>
</feature>
<feature type="binding site" evidence="1">
    <location>
        <position position="104"/>
    </location>
    <ligand>
        <name>Mg(2+)</name>
        <dbReference type="ChEBI" id="CHEBI:18420"/>
    </ligand>
</feature>
<feature type="binding site" evidence="1">
    <location>
        <position position="171"/>
    </location>
    <ligand>
        <name>K(+)</name>
        <dbReference type="ChEBI" id="CHEBI:29103"/>
    </ligand>
</feature>
<feature type="binding site" evidence="1">
    <location>
        <position position="172"/>
    </location>
    <ligand>
        <name>K(+)</name>
        <dbReference type="ChEBI" id="CHEBI:29103"/>
    </ligand>
</feature>
<feature type="binding site" evidence="1">
    <location>
        <position position="180"/>
    </location>
    <ligand>
        <name>K(+)</name>
        <dbReference type="ChEBI" id="CHEBI:29103"/>
    </ligand>
</feature>
<feature type="binding site" evidence="1">
    <location>
        <position position="182"/>
    </location>
    <ligand>
        <name>K(+)</name>
        <dbReference type="ChEBI" id="CHEBI:29103"/>
    </ligand>
</feature>
<feature type="binding site" evidence="1">
    <location>
        <position position="185"/>
    </location>
    <ligand>
        <name>K(+)</name>
        <dbReference type="ChEBI" id="CHEBI:29103"/>
    </ligand>
</feature>
<reference key="1">
    <citation type="journal article" date="2001" name="Nature">
        <title>Genome sequence of enterohaemorrhagic Escherichia coli O157:H7.</title>
        <authorList>
            <person name="Perna N.T."/>
            <person name="Plunkett G. III"/>
            <person name="Burland V."/>
            <person name="Mau B."/>
            <person name="Glasner J.D."/>
            <person name="Rose D.J."/>
            <person name="Mayhew G.F."/>
            <person name="Evans P.S."/>
            <person name="Gregor J."/>
            <person name="Kirkpatrick H.A."/>
            <person name="Posfai G."/>
            <person name="Hackett J."/>
            <person name="Klink S."/>
            <person name="Boutin A."/>
            <person name="Shao Y."/>
            <person name="Miller L."/>
            <person name="Grotbeck E.J."/>
            <person name="Davis N.W."/>
            <person name="Lim A."/>
            <person name="Dimalanta E.T."/>
            <person name="Potamousis K."/>
            <person name="Apodaca J."/>
            <person name="Anantharaman T.S."/>
            <person name="Lin J."/>
            <person name="Yen G."/>
            <person name="Schwartz D.C."/>
            <person name="Welch R.A."/>
            <person name="Blattner F.R."/>
        </authorList>
    </citation>
    <scope>NUCLEOTIDE SEQUENCE [LARGE SCALE GENOMIC DNA]</scope>
    <source>
        <strain>O157:H7 / EDL933 / ATCC 700927 / EHEC</strain>
    </source>
</reference>
<reference key="2">
    <citation type="journal article" date="2001" name="DNA Res.">
        <title>Complete genome sequence of enterohemorrhagic Escherichia coli O157:H7 and genomic comparison with a laboratory strain K-12.</title>
        <authorList>
            <person name="Hayashi T."/>
            <person name="Makino K."/>
            <person name="Ohnishi M."/>
            <person name="Kurokawa K."/>
            <person name="Ishii K."/>
            <person name="Yokoyama K."/>
            <person name="Han C.-G."/>
            <person name="Ohtsubo E."/>
            <person name="Nakayama K."/>
            <person name="Murata T."/>
            <person name="Tanaka M."/>
            <person name="Tobe T."/>
            <person name="Iida T."/>
            <person name="Takami H."/>
            <person name="Honda T."/>
            <person name="Sasakawa C."/>
            <person name="Ogasawara N."/>
            <person name="Yasunaga T."/>
            <person name="Kuhara S."/>
            <person name="Shiba T."/>
            <person name="Hattori M."/>
            <person name="Shinagawa H."/>
        </authorList>
    </citation>
    <scope>NUCLEOTIDE SEQUENCE [LARGE SCALE GENOMIC DNA]</scope>
    <source>
        <strain>O157:H7 / Sakai / RIMD 0509952 / EHEC</strain>
    </source>
</reference>
<name>XNI_ECO57</name>
<comment type="function">
    <text evidence="1">Has flap endonuclease activity. During DNA replication, flap endonucleases cleave the 5'-overhanging flap structure that is generated by displacement synthesis when DNA polymerase encounters the 5'-end of a downstream Okazaki fragment.</text>
</comment>
<comment type="cofactor">
    <cofactor evidence="1">
        <name>Mg(2+)</name>
        <dbReference type="ChEBI" id="CHEBI:18420"/>
    </cofactor>
    <text evidence="1">Binds 2 Mg(2+) per subunit. Only one magnesium ion has a direct interaction with the protein, the other interactions are indirect.</text>
</comment>
<comment type="cofactor">
    <cofactor evidence="1">
        <name>K(+)</name>
        <dbReference type="ChEBI" id="CHEBI:29103"/>
    </cofactor>
    <text evidence="1">Binds 1 K(+) per subunit. The potassium ion strongly increases the affinity for DNA.</text>
</comment>
<comment type="similarity">
    <text evidence="1">Belongs to the Xni family.</text>
</comment>
<comment type="sequence caution" evidence="2">
    <conflict type="erroneous initiation">
        <sequence resource="EMBL-CDS" id="AAG57912"/>
    </conflict>
    <text>Extended N-terminus.</text>
</comment>
<comment type="sequence caution" evidence="2">
    <conflict type="erroneous initiation">
        <sequence resource="EMBL-CDS" id="BAB37081"/>
    </conflict>
    <text>Extended N-terminus.</text>
</comment>
<gene>
    <name evidence="1" type="primary">xni</name>
    <name evidence="1" type="synonym">ygdG</name>
    <name type="ordered locus">Z4115</name>
    <name type="ordered locus">ECs3658</name>
</gene>
<sequence>MAVHLLIVDALNLIRRIHAVQGSPCVETCQHALDQLIMHSQPTHAVAVFDDENRSSGWRHQRLPDYKAGRPPMPEELHDEMPALRAAFEQRGVPCWSTSGNEADDLAATLAVKVTQAGHQATIVSTDKGYCQLLSPTLRIRDYFQKRWLDAPFIDKEFGVQPQQLPDYWGLAGISSSKVPGVAGIGPKSATQLLVEFQSLEGIYENLDAVAEKWRKKLETHKEMAFLCRDIARLQTDLHIDGNLQQLRLVR</sequence>
<protein>
    <recommendedName>
        <fullName evidence="1">Flap endonuclease Xni</fullName>
        <shortName evidence="1">FEN</shortName>
        <ecNumber evidence="1">3.1.-.-</ecNumber>
    </recommendedName>
</protein>